<reference key="1">
    <citation type="submission" date="2008-12" db="EMBL/GenBank/DDBJ databases">
        <title>Complete sequence of Chloroflexus aggregans DSM 9485.</title>
        <authorList>
            <consortium name="US DOE Joint Genome Institute"/>
            <person name="Lucas S."/>
            <person name="Copeland A."/>
            <person name="Lapidus A."/>
            <person name="Glavina del Rio T."/>
            <person name="Dalin E."/>
            <person name="Tice H."/>
            <person name="Pitluck S."/>
            <person name="Foster B."/>
            <person name="Larimer F."/>
            <person name="Land M."/>
            <person name="Hauser L."/>
            <person name="Kyrpides N."/>
            <person name="Mikhailova N."/>
            <person name="Bryant D.A."/>
            <person name="Richardson P."/>
        </authorList>
    </citation>
    <scope>NUCLEOTIDE SEQUENCE [LARGE SCALE GENOMIC DNA]</scope>
    <source>
        <strain>MD-66 / DSM 9485</strain>
    </source>
</reference>
<sequence length="110" mass="12159">MHVKTGDEVLVIAGKDKGRRGKIKRALPAVNRVVVEGLNIVKRHQKPRGPGRPGGIVEMEAPIHVSNVMLICPSCGRASRTGKRFLEETDHKGRPRKVRYCKACDAIIDK</sequence>
<organism>
    <name type="scientific">Chloroflexus aggregans (strain MD-66 / DSM 9485)</name>
    <dbReference type="NCBI Taxonomy" id="326427"/>
    <lineage>
        <taxon>Bacteria</taxon>
        <taxon>Bacillati</taxon>
        <taxon>Chloroflexota</taxon>
        <taxon>Chloroflexia</taxon>
        <taxon>Chloroflexales</taxon>
        <taxon>Chloroflexineae</taxon>
        <taxon>Chloroflexaceae</taxon>
        <taxon>Chloroflexus</taxon>
    </lineage>
</organism>
<dbReference type="EMBL" id="CP001337">
    <property type="protein sequence ID" value="ACL25873.1"/>
    <property type="molecule type" value="Genomic_DNA"/>
</dbReference>
<dbReference type="RefSeq" id="WP_015941727.1">
    <property type="nucleotide sequence ID" value="NC_011831.1"/>
</dbReference>
<dbReference type="SMR" id="B8G6R4"/>
<dbReference type="STRING" id="326427.Cagg_3013"/>
<dbReference type="KEGG" id="cag:Cagg_3013"/>
<dbReference type="eggNOG" id="COG0198">
    <property type="taxonomic scope" value="Bacteria"/>
</dbReference>
<dbReference type="HOGENOM" id="CLU_093315_2_0_0"/>
<dbReference type="OrthoDB" id="9807419at2"/>
<dbReference type="Proteomes" id="UP000002508">
    <property type="component" value="Chromosome"/>
</dbReference>
<dbReference type="GO" id="GO:1990904">
    <property type="term" value="C:ribonucleoprotein complex"/>
    <property type="evidence" value="ECO:0007669"/>
    <property type="project" value="UniProtKB-KW"/>
</dbReference>
<dbReference type="GO" id="GO:0005840">
    <property type="term" value="C:ribosome"/>
    <property type="evidence" value="ECO:0007669"/>
    <property type="project" value="UniProtKB-KW"/>
</dbReference>
<dbReference type="GO" id="GO:0019843">
    <property type="term" value="F:rRNA binding"/>
    <property type="evidence" value="ECO:0007669"/>
    <property type="project" value="UniProtKB-UniRule"/>
</dbReference>
<dbReference type="GO" id="GO:0003735">
    <property type="term" value="F:structural constituent of ribosome"/>
    <property type="evidence" value="ECO:0007669"/>
    <property type="project" value="InterPro"/>
</dbReference>
<dbReference type="GO" id="GO:0006412">
    <property type="term" value="P:translation"/>
    <property type="evidence" value="ECO:0007669"/>
    <property type="project" value="UniProtKB-UniRule"/>
</dbReference>
<dbReference type="CDD" id="cd06089">
    <property type="entry name" value="KOW_RPL26"/>
    <property type="match status" value="1"/>
</dbReference>
<dbReference type="FunFam" id="2.30.30.30:FF:000051">
    <property type="entry name" value="50S ribosomal protein L24"/>
    <property type="match status" value="1"/>
</dbReference>
<dbReference type="Gene3D" id="2.30.30.30">
    <property type="match status" value="1"/>
</dbReference>
<dbReference type="HAMAP" id="MF_01326_B">
    <property type="entry name" value="Ribosomal_uL24_B"/>
    <property type="match status" value="1"/>
</dbReference>
<dbReference type="InterPro" id="IPR005824">
    <property type="entry name" value="KOW"/>
</dbReference>
<dbReference type="InterPro" id="IPR014722">
    <property type="entry name" value="Rib_uL2_dom2"/>
</dbReference>
<dbReference type="InterPro" id="IPR003256">
    <property type="entry name" value="Ribosomal_uL24"/>
</dbReference>
<dbReference type="InterPro" id="IPR005825">
    <property type="entry name" value="Ribosomal_uL24_CS"/>
</dbReference>
<dbReference type="InterPro" id="IPR041988">
    <property type="entry name" value="Ribosomal_uL24_KOW"/>
</dbReference>
<dbReference type="InterPro" id="IPR008991">
    <property type="entry name" value="Translation_prot_SH3-like_sf"/>
</dbReference>
<dbReference type="NCBIfam" id="TIGR01079">
    <property type="entry name" value="rplX_bact"/>
    <property type="match status" value="1"/>
</dbReference>
<dbReference type="PANTHER" id="PTHR12903">
    <property type="entry name" value="MITOCHONDRIAL RIBOSOMAL PROTEIN L24"/>
    <property type="match status" value="1"/>
</dbReference>
<dbReference type="Pfam" id="PF00467">
    <property type="entry name" value="KOW"/>
    <property type="match status" value="1"/>
</dbReference>
<dbReference type="Pfam" id="PF17136">
    <property type="entry name" value="ribosomal_L24"/>
    <property type="match status" value="1"/>
</dbReference>
<dbReference type="SMART" id="SM00739">
    <property type="entry name" value="KOW"/>
    <property type="match status" value="1"/>
</dbReference>
<dbReference type="SUPFAM" id="SSF50104">
    <property type="entry name" value="Translation proteins SH3-like domain"/>
    <property type="match status" value="1"/>
</dbReference>
<dbReference type="PROSITE" id="PS01108">
    <property type="entry name" value="RIBOSOMAL_L24"/>
    <property type="match status" value="1"/>
</dbReference>
<evidence type="ECO:0000255" key="1">
    <source>
        <dbReference type="HAMAP-Rule" id="MF_01326"/>
    </source>
</evidence>
<evidence type="ECO:0000305" key="2"/>
<name>RL24_CHLAD</name>
<accession>B8G6R4</accession>
<gene>
    <name evidence="1" type="primary">rplX</name>
    <name type="ordered locus">Cagg_3013</name>
</gene>
<comment type="function">
    <text evidence="1">One of two assembly initiator proteins, it binds directly to the 5'-end of the 23S rRNA, where it nucleates assembly of the 50S subunit.</text>
</comment>
<comment type="function">
    <text evidence="1">One of the proteins that surrounds the polypeptide exit tunnel on the outside of the subunit.</text>
</comment>
<comment type="subunit">
    <text evidence="1">Part of the 50S ribosomal subunit.</text>
</comment>
<comment type="similarity">
    <text evidence="1">Belongs to the universal ribosomal protein uL24 family.</text>
</comment>
<proteinExistence type="inferred from homology"/>
<keyword id="KW-0687">Ribonucleoprotein</keyword>
<keyword id="KW-0689">Ribosomal protein</keyword>
<keyword id="KW-0694">RNA-binding</keyword>
<keyword id="KW-0699">rRNA-binding</keyword>
<protein>
    <recommendedName>
        <fullName evidence="1">Large ribosomal subunit protein uL24</fullName>
    </recommendedName>
    <alternativeName>
        <fullName evidence="2">50S ribosomal protein L24</fullName>
    </alternativeName>
</protein>
<feature type="chain" id="PRO_1000165935" description="Large ribosomal subunit protein uL24">
    <location>
        <begin position="1"/>
        <end position="110"/>
    </location>
</feature>